<protein>
    <recommendedName>
        <fullName>Envelope protein UL45</fullName>
    </recommendedName>
    <alternativeName>
        <fullName>18 kDa protein</fullName>
    </alternativeName>
</protein>
<comment type="function">
    <text evidence="1 3">Important virulence factor of HSV neurotropism. Seems to be required for glycoprotein B-induced fusion. Dispensable for growth in vitro (By similarity).</text>
</comment>
<comment type="subcellular location">
    <subcellularLocation>
        <location evidence="1">Virion membrane</location>
        <topology evidence="1">Single-pass type II membrane protein</topology>
    </subcellularLocation>
    <text evidence="1">In transfected cells, it is retained within the ER.</text>
</comment>
<comment type="similarity">
    <text evidence="4">Belongs to the herpesviridae HHV-1 UL45 family.</text>
</comment>
<feature type="chain" id="PRO_0000116087" description="Envelope protein UL45">
    <location>
        <begin position="1"/>
        <end position="172"/>
    </location>
</feature>
<feature type="topological domain" description="Intravirion" evidence="2">
    <location>
        <begin position="1"/>
        <end position="27"/>
    </location>
</feature>
<feature type="transmembrane region" description="Helical; Signal-anchor for type II membrane protein" evidence="2">
    <location>
        <begin position="28"/>
        <end position="48"/>
    </location>
</feature>
<feature type="topological domain" description="Virion surface" evidence="2">
    <location>
        <begin position="49"/>
        <end position="172"/>
    </location>
</feature>
<organism>
    <name type="scientific">Human herpesvirus 1 (strain KOS)</name>
    <name type="common">HHV-1</name>
    <name type="synonym">Human herpes simplex virus 1</name>
    <dbReference type="NCBI Taxonomy" id="10306"/>
    <lineage>
        <taxon>Viruses</taxon>
        <taxon>Duplodnaviria</taxon>
        <taxon>Heunggongvirae</taxon>
        <taxon>Peploviricota</taxon>
        <taxon>Herviviricetes</taxon>
        <taxon>Herpesvirales</taxon>
        <taxon>Orthoherpesviridae</taxon>
        <taxon>Alphaherpesvirinae</taxon>
        <taxon>Simplexvirus</taxon>
        <taxon>Simplexvirus humanalpha1</taxon>
        <taxon>Human herpesvirus 1</taxon>
    </lineage>
</organism>
<accession>P28987</accession>
<dbReference type="EMBL" id="J02216">
    <property type="protein sequence ID" value="AAA45781.1"/>
    <property type="molecule type" value="Genomic_DNA"/>
</dbReference>
<dbReference type="GO" id="GO:0016020">
    <property type="term" value="C:membrane"/>
    <property type="evidence" value="ECO:0007669"/>
    <property type="project" value="UniProtKB-KW"/>
</dbReference>
<dbReference type="GO" id="GO:0019031">
    <property type="term" value="C:viral envelope"/>
    <property type="evidence" value="ECO:0007669"/>
    <property type="project" value="UniProtKB-KW"/>
</dbReference>
<dbReference type="GO" id="GO:0055036">
    <property type="term" value="C:virion membrane"/>
    <property type="evidence" value="ECO:0007669"/>
    <property type="project" value="UniProtKB-SubCell"/>
</dbReference>
<dbReference type="InterPro" id="IPR018002">
    <property type="entry name" value="Herpes_UL45"/>
</dbReference>
<dbReference type="Pfam" id="PF05473">
    <property type="entry name" value="UL45"/>
    <property type="match status" value="1"/>
</dbReference>
<dbReference type="PIRSF" id="PIRSF003509">
    <property type="entry name" value="Herpes_UL45"/>
    <property type="match status" value="1"/>
</dbReference>
<reference key="1">
    <citation type="journal article" date="1983" name="J. Virol.">
        <title>Detailed analysis of the portion of the herpes simplex virus type 1 genome encoding glycoprotein C.</title>
        <authorList>
            <person name="Frink R.J."/>
            <person name="Eisenberg R.J."/>
            <person name="Cohen G.H."/>
            <person name="Wagner E.K."/>
        </authorList>
    </citation>
    <scope>NUCLEOTIDE SEQUENCE [GENOMIC DNA]</scope>
</reference>
<reference key="2">
    <citation type="journal article" date="2002" name="Arch. Virol.">
        <title>Mutation of the herpes simplex virus 1 KOS UL45 gene reveals dose dependent effects on central nervous system growth.</title>
        <authorList>
            <person name="Visalli R.J."/>
            <person name="Brandt C.R."/>
        </authorList>
    </citation>
    <scope>FUNCTION</scope>
</reference>
<evidence type="ECO:0000250" key="1"/>
<evidence type="ECO:0000255" key="2"/>
<evidence type="ECO:0000269" key="3">
    <source>
    </source>
</evidence>
<evidence type="ECO:0000305" key="4"/>
<proteinExistence type="inferred from homology"/>
<name>EV45_HHV1K</name>
<gene>
    <name type="ORF">UL45</name>
</gene>
<keyword id="KW-0472">Membrane</keyword>
<keyword id="KW-0735">Signal-anchor</keyword>
<keyword id="KW-0812">Transmembrane</keyword>
<keyword id="KW-1133">Transmembrane helix</keyword>
<keyword id="KW-0261">Viral envelope protein</keyword>
<keyword id="KW-0946">Virion</keyword>
<sequence length="172" mass="18233">MPLRASEHAYRPLGPGTPPMRARLPAAAWVGVGTIIGGVVIIAALVLVPSRASWALSPCDSGWHEFNLGCISWDPTPMEHEQAVGGCSAPATLIPRAAAKQLAAVARVQSARSSGYWWVSGDGIRARLRLVDGVGGIDQFCEEPALRICYYPRSPGGFVQFVTSTRNALGLP</sequence>
<organismHost>
    <name type="scientific">Homo sapiens</name>
    <name type="common">Human</name>
    <dbReference type="NCBI Taxonomy" id="9606"/>
</organismHost>